<gene>
    <name evidence="1" type="primary">mutS</name>
    <name type="ordered locus">SG2812</name>
</gene>
<reference key="1">
    <citation type="journal article" date="2008" name="Genome Res.">
        <title>Comparative genome analysis of Salmonella enteritidis PT4 and Salmonella gallinarum 287/91 provides insights into evolutionary and host adaptation pathways.</title>
        <authorList>
            <person name="Thomson N.R."/>
            <person name="Clayton D.J."/>
            <person name="Windhorst D."/>
            <person name="Vernikos G."/>
            <person name="Davidson S."/>
            <person name="Churcher C."/>
            <person name="Quail M.A."/>
            <person name="Stevens M."/>
            <person name="Jones M.A."/>
            <person name="Watson M."/>
            <person name="Barron A."/>
            <person name="Layton A."/>
            <person name="Pickard D."/>
            <person name="Kingsley R.A."/>
            <person name="Bignell A."/>
            <person name="Clark L."/>
            <person name="Harris B."/>
            <person name="Ormond D."/>
            <person name="Abdellah Z."/>
            <person name="Brooks K."/>
            <person name="Cherevach I."/>
            <person name="Chillingworth T."/>
            <person name="Woodward J."/>
            <person name="Norberczak H."/>
            <person name="Lord A."/>
            <person name="Arrowsmith C."/>
            <person name="Jagels K."/>
            <person name="Moule S."/>
            <person name="Mungall K."/>
            <person name="Saunders M."/>
            <person name="Whitehead S."/>
            <person name="Chabalgoity J.A."/>
            <person name="Maskell D."/>
            <person name="Humphreys T."/>
            <person name="Roberts M."/>
            <person name="Barrow P.A."/>
            <person name="Dougan G."/>
            <person name="Parkhill J."/>
        </authorList>
    </citation>
    <scope>NUCLEOTIDE SEQUENCE [LARGE SCALE GENOMIC DNA]</scope>
    <source>
        <strain>287/91 / NCTC 13346</strain>
    </source>
</reference>
<name>MUTS_SALG2</name>
<dbReference type="EMBL" id="AM933173">
    <property type="protein sequence ID" value="CAR38620.1"/>
    <property type="molecule type" value="Genomic_DNA"/>
</dbReference>
<dbReference type="RefSeq" id="WP_001005807.1">
    <property type="nucleotide sequence ID" value="NC_011274.1"/>
</dbReference>
<dbReference type="SMR" id="B5RDN2"/>
<dbReference type="KEGG" id="seg:SG2812"/>
<dbReference type="HOGENOM" id="CLU_002472_4_0_6"/>
<dbReference type="Proteomes" id="UP000008321">
    <property type="component" value="Chromosome"/>
</dbReference>
<dbReference type="GO" id="GO:0005829">
    <property type="term" value="C:cytosol"/>
    <property type="evidence" value="ECO:0007669"/>
    <property type="project" value="TreeGrafter"/>
</dbReference>
<dbReference type="GO" id="GO:0005524">
    <property type="term" value="F:ATP binding"/>
    <property type="evidence" value="ECO:0007669"/>
    <property type="project" value="UniProtKB-UniRule"/>
</dbReference>
<dbReference type="GO" id="GO:0140664">
    <property type="term" value="F:ATP-dependent DNA damage sensor activity"/>
    <property type="evidence" value="ECO:0007669"/>
    <property type="project" value="InterPro"/>
</dbReference>
<dbReference type="GO" id="GO:0003684">
    <property type="term" value="F:damaged DNA binding"/>
    <property type="evidence" value="ECO:0007669"/>
    <property type="project" value="UniProtKB-UniRule"/>
</dbReference>
<dbReference type="GO" id="GO:0030983">
    <property type="term" value="F:mismatched DNA binding"/>
    <property type="evidence" value="ECO:0007669"/>
    <property type="project" value="InterPro"/>
</dbReference>
<dbReference type="GO" id="GO:0006298">
    <property type="term" value="P:mismatch repair"/>
    <property type="evidence" value="ECO:0007669"/>
    <property type="project" value="UniProtKB-UniRule"/>
</dbReference>
<dbReference type="CDD" id="cd03284">
    <property type="entry name" value="ABC_MutS1"/>
    <property type="match status" value="1"/>
</dbReference>
<dbReference type="FunFam" id="1.10.1420.10:FF:000002">
    <property type="entry name" value="DNA mismatch repair protein MutS"/>
    <property type="match status" value="1"/>
</dbReference>
<dbReference type="FunFam" id="3.30.420.110:FF:000001">
    <property type="entry name" value="DNA mismatch repair protein MutS"/>
    <property type="match status" value="1"/>
</dbReference>
<dbReference type="FunFam" id="3.40.1170.10:FF:000001">
    <property type="entry name" value="DNA mismatch repair protein MutS"/>
    <property type="match status" value="1"/>
</dbReference>
<dbReference type="FunFam" id="3.40.50.300:FF:000283">
    <property type="entry name" value="DNA mismatch repair protein MutS"/>
    <property type="match status" value="1"/>
</dbReference>
<dbReference type="Gene3D" id="1.10.1420.10">
    <property type="match status" value="2"/>
</dbReference>
<dbReference type="Gene3D" id="6.10.140.430">
    <property type="match status" value="1"/>
</dbReference>
<dbReference type="Gene3D" id="3.40.1170.10">
    <property type="entry name" value="DNA repair protein MutS, domain I"/>
    <property type="match status" value="1"/>
</dbReference>
<dbReference type="Gene3D" id="3.30.420.110">
    <property type="entry name" value="MutS, connector domain"/>
    <property type="match status" value="1"/>
</dbReference>
<dbReference type="Gene3D" id="3.40.50.300">
    <property type="entry name" value="P-loop containing nucleotide triphosphate hydrolases"/>
    <property type="match status" value="1"/>
</dbReference>
<dbReference type="HAMAP" id="MF_00096">
    <property type="entry name" value="MutS"/>
    <property type="match status" value="1"/>
</dbReference>
<dbReference type="InterPro" id="IPR005748">
    <property type="entry name" value="DNA_mismatch_repair_MutS"/>
</dbReference>
<dbReference type="InterPro" id="IPR007695">
    <property type="entry name" value="DNA_mismatch_repair_MutS-lik_N"/>
</dbReference>
<dbReference type="InterPro" id="IPR017261">
    <property type="entry name" value="DNA_mismatch_repair_MutS/MSH"/>
</dbReference>
<dbReference type="InterPro" id="IPR000432">
    <property type="entry name" value="DNA_mismatch_repair_MutS_C"/>
</dbReference>
<dbReference type="InterPro" id="IPR007861">
    <property type="entry name" value="DNA_mismatch_repair_MutS_clamp"/>
</dbReference>
<dbReference type="InterPro" id="IPR007696">
    <property type="entry name" value="DNA_mismatch_repair_MutS_core"/>
</dbReference>
<dbReference type="InterPro" id="IPR016151">
    <property type="entry name" value="DNA_mismatch_repair_MutS_N"/>
</dbReference>
<dbReference type="InterPro" id="IPR036187">
    <property type="entry name" value="DNA_mismatch_repair_MutS_sf"/>
</dbReference>
<dbReference type="InterPro" id="IPR007860">
    <property type="entry name" value="DNA_mmatch_repair_MutS_con_dom"/>
</dbReference>
<dbReference type="InterPro" id="IPR045076">
    <property type="entry name" value="MutS"/>
</dbReference>
<dbReference type="InterPro" id="IPR036678">
    <property type="entry name" value="MutS_con_dom_sf"/>
</dbReference>
<dbReference type="InterPro" id="IPR027417">
    <property type="entry name" value="P-loop_NTPase"/>
</dbReference>
<dbReference type="NCBIfam" id="TIGR01070">
    <property type="entry name" value="mutS1"/>
    <property type="match status" value="1"/>
</dbReference>
<dbReference type="NCBIfam" id="NF003810">
    <property type="entry name" value="PRK05399.1"/>
    <property type="match status" value="1"/>
</dbReference>
<dbReference type="PANTHER" id="PTHR11361:SF34">
    <property type="entry name" value="DNA MISMATCH REPAIR PROTEIN MSH1, MITOCHONDRIAL"/>
    <property type="match status" value="1"/>
</dbReference>
<dbReference type="PANTHER" id="PTHR11361">
    <property type="entry name" value="DNA MISMATCH REPAIR PROTEIN MUTS FAMILY MEMBER"/>
    <property type="match status" value="1"/>
</dbReference>
<dbReference type="Pfam" id="PF01624">
    <property type="entry name" value="MutS_I"/>
    <property type="match status" value="1"/>
</dbReference>
<dbReference type="Pfam" id="PF05188">
    <property type="entry name" value="MutS_II"/>
    <property type="match status" value="1"/>
</dbReference>
<dbReference type="Pfam" id="PF05192">
    <property type="entry name" value="MutS_III"/>
    <property type="match status" value="1"/>
</dbReference>
<dbReference type="Pfam" id="PF05190">
    <property type="entry name" value="MutS_IV"/>
    <property type="match status" value="1"/>
</dbReference>
<dbReference type="Pfam" id="PF00488">
    <property type="entry name" value="MutS_V"/>
    <property type="match status" value="1"/>
</dbReference>
<dbReference type="PIRSF" id="PIRSF037677">
    <property type="entry name" value="DNA_mis_repair_Msh6"/>
    <property type="match status" value="1"/>
</dbReference>
<dbReference type="SMART" id="SM00534">
    <property type="entry name" value="MUTSac"/>
    <property type="match status" value="1"/>
</dbReference>
<dbReference type="SMART" id="SM00533">
    <property type="entry name" value="MUTSd"/>
    <property type="match status" value="1"/>
</dbReference>
<dbReference type="SUPFAM" id="SSF55271">
    <property type="entry name" value="DNA repair protein MutS, domain I"/>
    <property type="match status" value="1"/>
</dbReference>
<dbReference type="SUPFAM" id="SSF53150">
    <property type="entry name" value="DNA repair protein MutS, domain II"/>
    <property type="match status" value="1"/>
</dbReference>
<dbReference type="SUPFAM" id="SSF48334">
    <property type="entry name" value="DNA repair protein MutS, domain III"/>
    <property type="match status" value="1"/>
</dbReference>
<dbReference type="SUPFAM" id="SSF52540">
    <property type="entry name" value="P-loop containing nucleoside triphosphate hydrolases"/>
    <property type="match status" value="1"/>
</dbReference>
<dbReference type="PROSITE" id="PS00486">
    <property type="entry name" value="DNA_MISMATCH_REPAIR_2"/>
    <property type="match status" value="1"/>
</dbReference>
<evidence type="ECO:0000255" key="1">
    <source>
        <dbReference type="HAMAP-Rule" id="MF_00096"/>
    </source>
</evidence>
<comment type="function">
    <text evidence="1">This protein is involved in the repair of mismatches in DNA. It is possible that it carries out the mismatch recognition step. This protein has a weak ATPase activity.</text>
</comment>
<comment type="similarity">
    <text evidence="1">Belongs to the DNA mismatch repair MutS family.</text>
</comment>
<organism>
    <name type="scientific">Salmonella gallinarum (strain 287/91 / NCTC 13346)</name>
    <dbReference type="NCBI Taxonomy" id="550538"/>
    <lineage>
        <taxon>Bacteria</taxon>
        <taxon>Pseudomonadati</taxon>
        <taxon>Pseudomonadota</taxon>
        <taxon>Gammaproteobacteria</taxon>
        <taxon>Enterobacterales</taxon>
        <taxon>Enterobacteriaceae</taxon>
        <taxon>Salmonella</taxon>
    </lineage>
</organism>
<accession>B5RDN2</accession>
<sequence>MNESFDKDFSNHTPMMQQYLKLKAQHPEILLFYRMGDFYELFYDDAKRASQLLDISLTKRGASAGEPIPMAGIPHHAVENYLAKLVNQGESVAICEQIGDPATSKGPVERKVVRIVTPGTISDEALLQERQDNLLAAIWQDGKGYGYATLDISSGRFRLSEPADRETMAAELQRTNPAELLYAEDFAEMALIEGRRGLRRRPLWEFEIDTARQQLNLQFGTRDLVGFGVENASRGLCAAGCLLQYVKDTQRTSLPHIRSITMERQQDSIIMDAATRRNLEITQNLAGGVENTLAAVLDCTVTPMGSRMLKRWLHMPVRNTDILRERQQTIGALQDTVSELQPVLRQVGDLERILARLALRTARPRDLARMRHAFQQLPELHAQLETVDSAPVQALRKKMGDFAELRDLLERAIIDAPPVLVRDGGVIAPGYHEELDEWRALADGATDYLDRLEIRERERTGLDTLKVGYNAVHGYYIQISRGQSHLAPINYVRRQTLKNAERYIIPELKEYEDKVLTSKGKALALEKQLYDELFDLLLPHLADLQQSANALAELDVLVNLAERAWTLNYTCPTFTDKPGIRITEGRHPVVEQVLNEPFIANPLNLSPQRRMLIITGPNMGGKSTYMRQTALIALLAYIGSYVPAQNVEIGPIDRIFTRVGAADDLASGRSTFMVEMTETANILHNATENSLVLMDEIGRGTSTYDGLSLAWACAENLANKIKALTLFATHYFELTQLPEKMEGVANVHLDALEHGDTIAFMHSVQDGAASKSYGLAVAALAGVPKEVIKRARQKLRELESISPNAAATQVDGTQMSLLAAPEETSPAVEALENLDPDSLTPRQALEWIYRLKSLV</sequence>
<keyword id="KW-0067">ATP-binding</keyword>
<keyword id="KW-0227">DNA damage</keyword>
<keyword id="KW-0234">DNA repair</keyword>
<keyword id="KW-0238">DNA-binding</keyword>
<keyword id="KW-0547">Nucleotide-binding</keyword>
<feature type="chain" id="PRO_1000093642" description="DNA mismatch repair protein MutS">
    <location>
        <begin position="1"/>
        <end position="855"/>
    </location>
</feature>
<feature type="binding site" evidence="1">
    <location>
        <begin position="616"/>
        <end position="623"/>
    </location>
    <ligand>
        <name>ATP</name>
        <dbReference type="ChEBI" id="CHEBI:30616"/>
    </ligand>
</feature>
<proteinExistence type="inferred from homology"/>
<protein>
    <recommendedName>
        <fullName evidence="1">DNA mismatch repair protein MutS</fullName>
    </recommendedName>
</protein>